<reference key="1">
    <citation type="submission" date="2006-08" db="EMBL/GenBank/DDBJ databases">
        <title>Complete sequence of chromosome 1 of Burkholderia cepacia AMMD.</title>
        <authorList>
            <person name="Copeland A."/>
            <person name="Lucas S."/>
            <person name="Lapidus A."/>
            <person name="Barry K."/>
            <person name="Detter J.C."/>
            <person name="Glavina del Rio T."/>
            <person name="Hammon N."/>
            <person name="Israni S."/>
            <person name="Pitluck S."/>
            <person name="Bruce D."/>
            <person name="Chain P."/>
            <person name="Malfatti S."/>
            <person name="Shin M."/>
            <person name="Vergez L."/>
            <person name="Schmutz J."/>
            <person name="Larimer F."/>
            <person name="Land M."/>
            <person name="Hauser L."/>
            <person name="Kyrpides N."/>
            <person name="Kim E."/>
            <person name="Parke J."/>
            <person name="Coenye T."/>
            <person name="Konstantinidis K."/>
            <person name="Ramette A."/>
            <person name="Tiedje J."/>
            <person name="Richardson P."/>
        </authorList>
    </citation>
    <scope>NUCLEOTIDE SEQUENCE [LARGE SCALE GENOMIC DNA]</scope>
    <source>
        <strain>ATCC BAA-244 / DSM 16087 / CCUG 44356 / LMG 19182 / AMMD</strain>
    </source>
</reference>
<feature type="chain" id="PRO_0000302488" description="ATP-dependent dethiobiotin synthetase BioD">
    <location>
        <begin position="1"/>
        <end position="239"/>
    </location>
</feature>
<feature type="active site" evidence="1">
    <location>
        <position position="40"/>
    </location>
</feature>
<feature type="binding site" evidence="1">
    <location>
        <begin position="15"/>
        <end position="20"/>
    </location>
    <ligand>
        <name>ATP</name>
        <dbReference type="ChEBI" id="CHEBI:30616"/>
    </ligand>
</feature>
<feature type="binding site" evidence="1">
    <location>
        <position position="19"/>
    </location>
    <ligand>
        <name>Mg(2+)</name>
        <dbReference type="ChEBI" id="CHEBI:18420"/>
    </ligand>
</feature>
<feature type="binding site" evidence="1">
    <location>
        <position position="57"/>
    </location>
    <ligand>
        <name>ATP</name>
        <dbReference type="ChEBI" id="CHEBI:30616"/>
    </ligand>
</feature>
<feature type="binding site" evidence="1">
    <location>
        <position position="57"/>
    </location>
    <ligand>
        <name>Mg(2+)</name>
        <dbReference type="ChEBI" id="CHEBI:18420"/>
    </ligand>
</feature>
<feature type="binding site" evidence="1">
    <location>
        <begin position="118"/>
        <end position="121"/>
    </location>
    <ligand>
        <name>ATP</name>
        <dbReference type="ChEBI" id="CHEBI:30616"/>
    </ligand>
</feature>
<feature type="binding site" evidence="1">
    <location>
        <position position="118"/>
    </location>
    <ligand>
        <name>Mg(2+)</name>
        <dbReference type="ChEBI" id="CHEBI:18420"/>
    </ligand>
</feature>
<feature type="binding site" evidence="1">
    <location>
        <begin position="178"/>
        <end position="179"/>
    </location>
    <ligand>
        <name>ATP</name>
        <dbReference type="ChEBI" id="CHEBI:30616"/>
    </ligand>
</feature>
<proteinExistence type="inferred from homology"/>
<comment type="function">
    <text evidence="1">Catalyzes a mechanistically unusual reaction, the ATP-dependent insertion of CO2 between the N7 and N8 nitrogen atoms of 7,8-diaminopelargonic acid (DAPA, also called 7,8-diammoniononanoate) to form a ureido ring.</text>
</comment>
<comment type="catalytic activity">
    <reaction evidence="1">
        <text>(7R,8S)-7,8-diammoniononanoate + CO2 + ATP = (4R,5S)-dethiobiotin + ADP + phosphate + 3 H(+)</text>
        <dbReference type="Rhea" id="RHEA:15805"/>
        <dbReference type="ChEBI" id="CHEBI:15378"/>
        <dbReference type="ChEBI" id="CHEBI:16526"/>
        <dbReference type="ChEBI" id="CHEBI:30616"/>
        <dbReference type="ChEBI" id="CHEBI:43474"/>
        <dbReference type="ChEBI" id="CHEBI:149469"/>
        <dbReference type="ChEBI" id="CHEBI:149473"/>
        <dbReference type="ChEBI" id="CHEBI:456216"/>
        <dbReference type="EC" id="6.3.3.3"/>
    </reaction>
</comment>
<comment type="cofactor">
    <cofactor evidence="1">
        <name>Mg(2+)</name>
        <dbReference type="ChEBI" id="CHEBI:18420"/>
    </cofactor>
</comment>
<comment type="pathway">
    <text evidence="1">Cofactor biosynthesis; biotin biosynthesis; biotin from 7,8-diaminononanoate: step 1/2.</text>
</comment>
<comment type="subunit">
    <text evidence="1">Homodimer.</text>
</comment>
<comment type="subcellular location">
    <subcellularLocation>
        <location evidence="1">Cytoplasm</location>
    </subcellularLocation>
</comment>
<comment type="similarity">
    <text evidence="1">Belongs to the dethiobiotin synthetase family.</text>
</comment>
<evidence type="ECO:0000255" key="1">
    <source>
        <dbReference type="HAMAP-Rule" id="MF_00336"/>
    </source>
</evidence>
<protein>
    <recommendedName>
        <fullName evidence="1">ATP-dependent dethiobiotin synthetase BioD</fullName>
        <ecNumber evidence="1">6.3.3.3</ecNumber>
    </recommendedName>
    <alternativeName>
        <fullName evidence="1">DTB synthetase</fullName>
        <shortName evidence="1">DTBS</shortName>
    </alternativeName>
    <alternativeName>
        <fullName evidence="1">Dethiobiotin synthase</fullName>
    </alternativeName>
</protein>
<dbReference type="EC" id="6.3.3.3" evidence="1"/>
<dbReference type="EMBL" id="CP000440">
    <property type="protein sequence ID" value="ABI88538.1"/>
    <property type="molecule type" value="Genomic_DNA"/>
</dbReference>
<dbReference type="RefSeq" id="WP_011658069.1">
    <property type="nucleotide sequence ID" value="NC_008390.1"/>
</dbReference>
<dbReference type="SMR" id="Q0BBD5"/>
<dbReference type="GeneID" id="93084816"/>
<dbReference type="KEGG" id="bam:Bamb_2982"/>
<dbReference type="PATRIC" id="fig|339670.21.peg.1892"/>
<dbReference type="eggNOG" id="COG0132">
    <property type="taxonomic scope" value="Bacteria"/>
</dbReference>
<dbReference type="UniPathway" id="UPA00078">
    <property type="reaction ID" value="UER00161"/>
</dbReference>
<dbReference type="Proteomes" id="UP000000662">
    <property type="component" value="Chromosome 1"/>
</dbReference>
<dbReference type="GO" id="GO:0005829">
    <property type="term" value="C:cytosol"/>
    <property type="evidence" value="ECO:0007669"/>
    <property type="project" value="TreeGrafter"/>
</dbReference>
<dbReference type="GO" id="GO:0005524">
    <property type="term" value="F:ATP binding"/>
    <property type="evidence" value="ECO:0007669"/>
    <property type="project" value="UniProtKB-UniRule"/>
</dbReference>
<dbReference type="GO" id="GO:0004141">
    <property type="term" value="F:dethiobiotin synthase activity"/>
    <property type="evidence" value="ECO:0007669"/>
    <property type="project" value="UniProtKB-UniRule"/>
</dbReference>
<dbReference type="GO" id="GO:0000287">
    <property type="term" value="F:magnesium ion binding"/>
    <property type="evidence" value="ECO:0007669"/>
    <property type="project" value="UniProtKB-UniRule"/>
</dbReference>
<dbReference type="GO" id="GO:0009102">
    <property type="term" value="P:biotin biosynthetic process"/>
    <property type="evidence" value="ECO:0007669"/>
    <property type="project" value="UniProtKB-UniRule"/>
</dbReference>
<dbReference type="CDD" id="cd03109">
    <property type="entry name" value="DTBS"/>
    <property type="match status" value="1"/>
</dbReference>
<dbReference type="FunFam" id="3.40.50.300:FF:000292">
    <property type="entry name" value="ATP-dependent dethiobiotin synthetase BioD"/>
    <property type="match status" value="1"/>
</dbReference>
<dbReference type="Gene3D" id="3.40.50.300">
    <property type="entry name" value="P-loop containing nucleotide triphosphate hydrolases"/>
    <property type="match status" value="1"/>
</dbReference>
<dbReference type="HAMAP" id="MF_00336">
    <property type="entry name" value="BioD"/>
    <property type="match status" value="1"/>
</dbReference>
<dbReference type="InterPro" id="IPR004472">
    <property type="entry name" value="DTB_synth_BioD"/>
</dbReference>
<dbReference type="InterPro" id="IPR027417">
    <property type="entry name" value="P-loop_NTPase"/>
</dbReference>
<dbReference type="NCBIfam" id="TIGR00347">
    <property type="entry name" value="bioD"/>
    <property type="match status" value="1"/>
</dbReference>
<dbReference type="PANTHER" id="PTHR43210">
    <property type="entry name" value="DETHIOBIOTIN SYNTHETASE"/>
    <property type="match status" value="1"/>
</dbReference>
<dbReference type="PANTHER" id="PTHR43210:SF5">
    <property type="entry name" value="DETHIOBIOTIN SYNTHETASE"/>
    <property type="match status" value="1"/>
</dbReference>
<dbReference type="Pfam" id="PF13500">
    <property type="entry name" value="AAA_26"/>
    <property type="match status" value="1"/>
</dbReference>
<dbReference type="PIRSF" id="PIRSF006755">
    <property type="entry name" value="DTB_synth"/>
    <property type="match status" value="1"/>
</dbReference>
<dbReference type="SUPFAM" id="SSF52540">
    <property type="entry name" value="P-loop containing nucleoside triphosphate hydrolases"/>
    <property type="match status" value="1"/>
</dbReference>
<name>BIOD_BURCM</name>
<organism>
    <name type="scientific">Burkholderia ambifaria (strain ATCC BAA-244 / DSM 16087 / CCUG 44356 / LMG 19182 / AMMD)</name>
    <name type="common">Burkholderia cepacia (strain AMMD)</name>
    <dbReference type="NCBI Taxonomy" id="339670"/>
    <lineage>
        <taxon>Bacteria</taxon>
        <taxon>Pseudomonadati</taxon>
        <taxon>Pseudomonadota</taxon>
        <taxon>Betaproteobacteria</taxon>
        <taxon>Burkholderiales</taxon>
        <taxon>Burkholderiaceae</taxon>
        <taxon>Burkholderia</taxon>
        <taxon>Burkholderia cepacia complex</taxon>
    </lineage>
</organism>
<accession>Q0BBD5</accession>
<keyword id="KW-0067">ATP-binding</keyword>
<keyword id="KW-0093">Biotin biosynthesis</keyword>
<keyword id="KW-0963">Cytoplasm</keyword>
<keyword id="KW-0436">Ligase</keyword>
<keyword id="KW-0460">Magnesium</keyword>
<keyword id="KW-0479">Metal-binding</keyword>
<keyword id="KW-0547">Nucleotide-binding</keyword>
<sequence length="239" mass="25058">MTAPLSLFVTGTDTEIGKTFVSAAMLHGFARHGLRAAALKPVAAGAYERDGVWRNEDADQLDAAANVVLPPELRTPFLLKAPAAPHIVAAQEGVTLDIDTIVACHREALTRADVVVVEGVGGFRVPLTDTQDTADLAVALGLPVVLVVGVRLGCISHALLTADAIRQRGLTLAGWVANHVDPAMSYADENVATIRDWLAREHGAPLLGRIPHMSPAAAESAAAMLDIAALVETLRAAQH</sequence>
<gene>
    <name evidence="1" type="primary">bioD</name>
    <name type="ordered locus">Bamb_2982</name>
</gene>